<protein>
    <recommendedName>
        <fullName evidence="1">HTH-type transcriptional repressor NsrR</fullName>
    </recommendedName>
</protein>
<sequence length="141" mass="15550">MQLTSFTDYGLRALIYMASLPEGLMTSISEVTDVYGVSRNHMVKIINQLSRAGYVTAVRGKNGGIRLGKPASAIRIGDVVRELEPLSLVNCSSEFCHITPACRLKQALSKAVQSFLTELDNYTLADLVEENQPLYKLLLVE</sequence>
<proteinExistence type="inferred from homology"/>
<organism>
    <name type="scientific">Escherichia coli O157:H7 (strain EC4115 / EHEC)</name>
    <dbReference type="NCBI Taxonomy" id="444450"/>
    <lineage>
        <taxon>Bacteria</taxon>
        <taxon>Pseudomonadati</taxon>
        <taxon>Pseudomonadota</taxon>
        <taxon>Gammaproteobacteria</taxon>
        <taxon>Enterobacterales</taxon>
        <taxon>Enterobacteriaceae</taxon>
        <taxon>Escherichia</taxon>
    </lineage>
</organism>
<gene>
    <name evidence="1" type="primary">nsrR</name>
    <name type="ordered locus">ECH74115_5694</name>
</gene>
<dbReference type="EMBL" id="CP001164">
    <property type="protein sequence ID" value="ACI36234.1"/>
    <property type="molecule type" value="Genomic_DNA"/>
</dbReference>
<dbReference type="RefSeq" id="WP_001177633.1">
    <property type="nucleotide sequence ID" value="NC_011353.1"/>
</dbReference>
<dbReference type="SMR" id="B5Z2I4"/>
<dbReference type="KEGG" id="ecf:ECH74115_5694"/>
<dbReference type="HOGENOM" id="CLU_107144_2_1_6"/>
<dbReference type="GO" id="GO:0005829">
    <property type="term" value="C:cytosol"/>
    <property type="evidence" value="ECO:0007669"/>
    <property type="project" value="TreeGrafter"/>
</dbReference>
<dbReference type="GO" id="GO:0051537">
    <property type="term" value="F:2 iron, 2 sulfur cluster binding"/>
    <property type="evidence" value="ECO:0007669"/>
    <property type="project" value="UniProtKB-KW"/>
</dbReference>
<dbReference type="GO" id="GO:0003700">
    <property type="term" value="F:DNA-binding transcription factor activity"/>
    <property type="evidence" value="ECO:0007669"/>
    <property type="project" value="UniProtKB-UniRule"/>
</dbReference>
<dbReference type="GO" id="GO:0003690">
    <property type="term" value="F:double-stranded DNA binding"/>
    <property type="evidence" value="ECO:0007669"/>
    <property type="project" value="UniProtKB-UniRule"/>
</dbReference>
<dbReference type="GO" id="GO:0005506">
    <property type="term" value="F:iron ion binding"/>
    <property type="evidence" value="ECO:0007669"/>
    <property type="project" value="UniProtKB-UniRule"/>
</dbReference>
<dbReference type="GO" id="GO:0045892">
    <property type="term" value="P:negative regulation of DNA-templated transcription"/>
    <property type="evidence" value="ECO:0007669"/>
    <property type="project" value="InterPro"/>
</dbReference>
<dbReference type="FunFam" id="1.10.10.10:FF:000105">
    <property type="entry name" value="HTH-type transcriptional repressor NsrR"/>
    <property type="match status" value="1"/>
</dbReference>
<dbReference type="Gene3D" id="1.10.10.10">
    <property type="entry name" value="Winged helix-like DNA-binding domain superfamily/Winged helix DNA-binding domain"/>
    <property type="match status" value="1"/>
</dbReference>
<dbReference type="HAMAP" id="MF_01177">
    <property type="entry name" value="HTH_type_NsrR"/>
    <property type="match status" value="1"/>
</dbReference>
<dbReference type="InterPro" id="IPR030489">
    <property type="entry name" value="TR_Rrf2-type_CS"/>
</dbReference>
<dbReference type="InterPro" id="IPR000944">
    <property type="entry name" value="Tscrpt_reg_Rrf2"/>
</dbReference>
<dbReference type="InterPro" id="IPR023761">
    <property type="entry name" value="Tscrpt_rep_HTH_NsrR"/>
</dbReference>
<dbReference type="InterPro" id="IPR036388">
    <property type="entry name" value="WH-like_DNA-bd_sf"/>
</dbReference>
<dbReference type="InterPro" id="IPR036390">
    <property type="entry name" value="WH_DNA-bd_sf"/>
</dbReference>
<dbReference type="NCBIfam" id="NF008240">
    <property type="entry name" value="PRK11014.1"/>
    <property type="match status" value="1"/>
</dbReference>
<dbReference type="NCBIfam" id="TIGR00738">
    <property type="entry name" value="rrf2_super"/>
    <property type="match status" value="1"/>
</dbReference>
<dbReference type="PANTHER" id="PTHR33221:SF4">
    <property type="entry name" value="HTH-TYPE TRANSCRIPTIONAL REPRESSOR NSRR"/>
    <property type="match status" value="1"/>
</dbReference>
<dbReference type="PANTHER" id="PTHR33221">
    <property type="entry name" value="WINGED HELIX-TURN-HELIX TRANSCRIPTIONAL REGULATOR, RRF2 FAMILY"/>
    <property type="match status" value="1"/>
</dbReference>
<dbReference type="Pfam" id="PF02082">
    <property type="entry name" value="Rrf2"/>
    <property type="match status" value="1"/>
</dbReference>
<dbReference type="SUPFAM" id="SSF46785">
    <property type="entry name" value="Winged helix' DNA-binding domain"/>
    <property type="match status" value="1"/>
</dbReference>
<dbReference type="PROSITE" id="PS01332">
    <property type="entry name" value="HTH_RRF2_1"/>
    <property type="match status" value="1"/>
</dbReference>
<dbReference type="PROSITE" id="PS51197">
    <property type="entry name" value="HTH_RRF2_2"/>
    <property type="match status" value="1"/>
</dbReference>
<name>NSRR_ECO5E</name>
<keyword id="KW-0001">2Fe-2S</keyword>
<keyword id="KW-0238">DNA-binding</keyword>
<keyword id="KW-0408">Iron</keyword>
<keyword id="KW-0411">Iron-sulfur</keyword>
<keyword id="KW-0479">Metal-binding</keyword>
<keyword id="KW-0678">Repressor</keyword>
<keyword id="KW-0804">Transcription</keyword>
<keyword id="KW-0805">Transcription regulation</keyword>
<accession>B5Z2I4</accession>
<comment type="function">
    <text evidence="1">Nitric oxide-sensitive repressor of genes involved in protecting the cell against nitrosative stress. May require iron for activity.</text>
</comment>
<comment type="cofactor">
    <cofactor evidence="1">
        <name>[2Fe-2S] cluster</name>
        <dbReference type="ChEBI" id="CHEBI:190135"/>
    </cofactor>
    <text evidence="1">Binds 1 [2Fe-2S] cluster per subunit.</text>
</comment>
<reference key="1">
    <citation type="journal article" date="2011" name="Proc. Natl. Acad. Sci. U.S.A.">
        <title>Genomic anatomy of Escherichia coli O157:H7 outbreaks.</title>
        <authorList>
            <person name="Eppinger M."/>
            <person name="Mammel M.K."/>
            <person name="Leclerc J.E."/>
            <person name="Ravel J."/>
            <person name="Cebula T.A."/>
        </authorList>
    </citation>
    <scope>NUCLEOTIDE SEQUENCE [LARGE SCALE GENOMIC DNA]</scope>
    <source>
        <strain>EC4115 / EHEC</strain>
    </source>
</reference>
<feature type="chain" id="PRO_1000138116" description="HTH-type transcriptional repressor NsrR">
    <location>
        <begin position="1"/>
        <end position="141"/>
    </location>
</feature>
<feature type="domain" description="HTH rrf2-type" evidence="1">
    <location>
        <begin position="2"/>
        <end position="129"/>
    </location>
</feature>
<feature type="DNA-binding region" description="H-T-H motif" evidence="1">
    <location>
        <begin position="28"/>
        <end position="51"/>
    </location>
</feature>
<feature type="binding site" evidence="1">
    <location>
        <position position="91"/>
    </location>
    <ligand>
        <name>[2Fe-2S] cluster</name>
        <dbReference type="ChEBI" id="CHEBI:190135"/>
    </ligand>
</feature>
<feature type="binding site" evidence="1">
    <location>
        <position position="96"/>
    </location>
    <ligand>
        <name>[2Fe-2S] cluster</name>
        <dbReference type="ChEBI" id="CHEBI:190135"/>
    </ligand>
</feature>
<feature type="binding site" evidence="1">
    <location>
        <position position="102"/>
    </location>
    <ligand>
        <name>[2Fe-2S] cluster</name>
        <dbReference type="ChEBI" id="CHEBI:190135"/>
    </ligand>
</feature>
<evidence type="ECO:0000255" key="1">
    <source>
        <dbReference type="HAMAP-Rule" id="MF_01177"/>
    </source>
</evidence>